<gene>
    <name evidence="1" type="primary">hemL</name>
    <name type="ordered locus">TERTU_3069</name>
</gene>
<proteinExistence type="inferred from homology"/>
<keyword id="KW-0963">Cytoplasm</keyword>
<keyword id="KW-0413">Isomerase</keyword>
<keyword id="KW-0627">Porphyrin biosynthesis</keyword>
<keyword id="KW-0663">Pyridoxal phosphate</keyword>
<keyword id="KW-1185">Reference proteome</keyword>
<protein>
    <recommendedName>
        <fullName evidence="1">Glutamate-1-semialdehyde 2,1-aminomutase</fullName>
        <shortName evidence="1">GSA</shortName>
        <ecNumber evidence="1">5.4.3.8</ecNumber>
    </recommendedName>
    <alternativeName>
        <fullName evidence="1">Glutamate-1-semialdehyde aminotransferase</fullName>
        <shortName evidence="1">GSA-AT</shortName>
    </alternativeName>
</protein>
<accession>C6AR33</accession>
<sequence>MSNFSEVFARAQKTIPGGVNSPVRAFKAVGGEPVFIDHAKGAYVYDIHGKRYVDYVLSWGPMLLGHGDDDVLDAVRAKLDKGLSFGAPTEIETELAEKICNIMPGMDKVRFVNSGTEATMSAIRLARGYTGRDKIVKFEGCYHGHSDSLLIKAGSGALTLGVPSSPGVPACLAEHTITLTYNNIEQVRQLFRDRGNEIACIIVEPVAGNMNCIPPEPGFLQALREVCTQADALLIFDEVMTGFRLGLSGAQGYYQVQPDITTLGKVIGGGMPVGAFGGSERIMDFIAPVGPVYQAGTLSGNPVAMAAGLKTLEKISAEGFYQPIFDKTAALCRNLESAAKEAGIGFTTNYVGSMWGGFFTEEEKISNYQQVMACNTERFNRFFHGMLDEGVYLAPASYEAGFMSVSHSDEDIDFTVNAARKVFANIK</sequence>
<comment type="catalytic activity">
    <reaction evidence="1">
        <text>(S)-4-amino-5-oxopentanoate = 5-aminolevulinate</text>
        <dbReference type="Rhea" id="RHEA:14265"/>
        <dbReference type="ChEBI" id="CHEBI:57501"/>
        <dbReference type="ChEBI" id="CHEBI:356416"/>
        <dbReference type="EC" id="5.4.3.8"/>
    </reaction>
</comment>
<comment type="cofactor">
    <cofactor evidence="1">
        <name>pyridoxal 5'-phosphate</name>
        <dbReference type="ChEBI" id="CHEBI:597326"/>
    </cofactor>
</comment>
<comment type="pathway">
    <text evidence="1">Porphyrin-containing compound metabolism; protoporphyrin-IX biosynthesis; 5-aminolevulinate from L-glutamyl-tRNA(Glu): step 2/2.</text>
</comment>
<comment type="subunit">
    <text evidence="1">Homodimer.</text>
</comment>
<comment type="subcellular location">
    <subcellularLocation>
        <location evidence="1">Cytoplasm</location>
    </subcellularLocation>
</comment>
<comment type="similarity">
    <text evidence="1">Belongs to the class-III pyridoxal-phosphate-dependent aminotransferase family. HemL subfamily.</text>
</comment>
<dbReference type="EC" id="5.4.3.8" evidence="1"/>
<dbReference type="EMBL" id="CP001614">
    <property type="protein sequence ID" value="ACS93577.1"/>
    <property type="molecule type" value="Genomic_DNA"/>
</dbReference>
<dbReference type="RefSeq" id="WP_015820971.1">
    <property type="nucleotide sequence ID" value="NC_012997.1"/>
</dbReference>
<dbReference type="SMR" id="C6AR33"/>
<dbReference type="STRING" id="377629.TERTU_3069"/>
<dbReference type="KEGG" id="ttu:TERTU_3069"/>
<dbReference type="eggNOG" id="COG0001">
    <property type="taxonomic scope" value="Bacteria"/>
</dbReference>
<dbReference type="HOGENOM" id="CLU_016922_1_5_6"/>
<dbReference type="OrthoDB" id="9801052at2"/>
<dbReference type="UniPathway" id="UPA00251">
    <property type="reaction ID" value="UER00317"/>
</dbReference>
<dbReference type="Proteomes" id="UP000009080">
    <property type="component" value="Chromosome"/>
</dbReference>
<dbReference type="GO" id="GO:0005737">
    <property type="term" value="C:cytoplasm"/>
    <property type="evidence" value="ECO:0007669"/>
    <property type="project" value="UniProtKB-SubCell"/>
</dbReference>
<dbReference type="GO" id="GO:0042286">
    <property type="term" value="F:glutamate-1-semialdehyde 2,1-aminomutase activity"/>
    <property type="evidence" value="ECO:0007669"/>
    <property type="project" value="UniProtKB-UniRule"/>
</dbReference>
<dbReference type="GO" id="GO:0030170">
    <property type="term" value="F:pyridoxal phosphate binding"/>
    <property type="evidence" value="ECO:0007669"/>
    <property type="project" value="InterPro"/>
</dbReference>
<dbReference type="GO" id="GO:0008483">
    <property type="term" value="F:transaminase activity"/>
    <property type="evidence" value="ECO:0007669"/>
    <property type="project" value="InterPro"/>
</dbReference>
<dbReference type="GO" id="GO:0006782">
    <property type="term" value="P:protoporphyrinogen IX biosynthetic process"/>
    <property type="evidence" value="ECO:0007669"/>
    <property type="project" value="UniProtKB-UniRule"/>
</dbReference>
<dbReference type="CDD" id="cd00610">
    <property type="entry name" value="OAT_like"/>
    <property type="match status" value="1"/>
</dbReference>
<dbReference type="FunFam" id="3.40.640.10:FF:000021">
    <property type="entry name" value="Glutamate-1-semialdehyde 2,1-aminomutase"/>
    <property type="match status" value="1"/>
</dbReference>
<dbReference type="Gene3D" id="3.90.1150.10">
    <property type="entry name" value="Aspartate Aminotransferase, domain 1"/>
    <property type="match status" value="1"/>
</dbReference>
<dbReference type="Gene3D" id="3.40.640.10">
    <property type="entry name" value="Type I PLP-dependent aspartate aminotransferase-like (Major domain)"/>
    <property type="match status" value="1"/>
</dbReference>
<dbReference type="HAMAP" id="MF_00375">
    <property type="entry name" value="HemL_aminotrans_3"/>
    <property type="match status" value="1"/>
</dbReference>
<dbReference type="InterPro" id="IPR004639">
    <property type="entry name" value="4pyrrol_synth_GluAld_NH2Trfase"/>
</dbReference>
<dbReference type="InterPro" id="IPR005814">
    <property type="entry name" value="Aminotrans_3"/>
</dbReference>
<dbReference type="InterPro" id="IPR049704">
    <property type="entry name" value="Aminotrans_3_PPA_site"/>
</dbReference>
<dbReference type="InterPro" id="IPR015424">
    <property type="entry name" value="PyrdxlP-dep_Trfase"/>
</dbReference>
<dbReference type="InterPro" id="IPR015421">
    <property type="entry name" value="PyrdxlP-dep_Trfase_major"/>
</dbReference>
<dbReference type="InterPro" id="IPR015422">
    <property type="entry name" value="PyrdxlP-dep_Trfase_small"/>
</dbReference>
<dbReference type="NCBIfam" id="TIGR00713">
    <property type="entry name" value="hemL"/>
    <property type="match status" value="1"/>
</dbReference>
<dbReference type="NCBIfam" id="NF000818">
    <property type="entry name" value="PRK00062.1"/>
    <property type="match status" value="1"/>
</dbReference>
<dbReference type="PANTHER" id="PTHR43713">
    <property type="entry name" value="GLUTAMATE-1-SEMIALDEHYDE 2,1-AMINOMUTASE"/>
    <property type="match status" value="1"/>
</dbReference>
<dbReference type="PANTHER" id="PTHR43713:SF3">
    <property type="entry name" value="GLUTAMATE-1-SEMIALDEHYDE 2,1-AMINOMUTASE 1, CHLOROPLASTIC-RELATED"/>
    <property type="match status" value="1"/>
</dbReference>
<dbReference type="Pfam" id="PF00202">
    <property type="entry name" value="Aminotran_3"/>
    <property type="match status" value="1"/>
</dbReference>
<dbReference type="SUPFAM" id="SSF53383">
    <property type="entry name" value="PLP-dependent transferases"/>
    <property type="match status" value="1"/>
</dbReference>
<dbReference type="PROSITE" id="PS00600">
    <property type="entry name" value="AA_TRANSFER_CLASS_3"/>
    <property type="match status" value="1"/>
</dbReference>
<evidence type="ECO:0000255" key="1">
    <source>
        <dbReference type="HAMAP-Rule" id="MF_00375"/>
    </source>
</evidence>
<feature type="chain" id="PRO_1000205646" description="Glutamate-1-semialdehyde 2,1-aminomutase">
    <location>
        <begin position="1"/>
        <end position="427"/>
    </location>
</feature>
<feature type="modified residue" description="N6-(pyridoxal phosphate)lysine" evidence="1">
    <location>
        <position position="265"/>
    </location>
</feature>
<name>GSA_TERTT</name>
<organism>
    <name type="scientific">Teredinibacter turnerae (strain ATCC 39867 / T7901)</name>
    <dbReference type="NCBI Taxonomy" id="377629"/>
    <lineage>
        <taxon>Bacteria</taxon>
        <taxon>Pseudomonadati</taxon>
        <taxon>Pseudomonadota</taxon>
        <taxon>Gammaproteobacteria</taxon>
        <taxon>Cellvibrionales</taxon>
        <taxon>Cellvibrionaceae</taxon>
        <taxon>Teredinibacter</taxon>
    </lineage>
</organism>
<reference key="1">
    <citation type="journal article" date="2009" name="PLoS ONE">
        <title>The complete genome of Teredinibacter turnerae T7901: an intracellular endosymbiont of marine wood-boring bivalves (shipworms).</title>
        <authorList>
            <person name="Yang J.C."/>
            <person name="Madupu R."/>
            <person name="Durkin A.S."/>
            <person name="Ekborg N.A."/>
            <person name="Pedamallu C.S."/>
            <person name="Hostetler J.B."/>
            <person name="Radune D."/>
            <person name="Toms B.S."/>
            <person name="Henrissat B."/>
            <person name="Coutinho P.M."/>
            <person name="Schwarz S."/>
            <person name="Field L."/>
            <person name="Trindade-Silva A.E."/>
            <person name="Soares C.A.G."/>
            <person name="Elshahawi S."/>
            <person name="Hanora A."/>
            <person name="Schmidt E.W."/>
            <person name="Haygood M.G."/>
            <person name="Posfai J."/>
            <person name="Benner J."/>
            <person name="Madinger C."/>
            <person name="Nove J."/>
            <person name="Anton B."/>
            <person name="Chaudhary K."/>
            <person name="Foster J."/>
            <person name="Holman A."/>
            <person name="Kumar S."/>
            <person name="Lessard P.A."/>
            <person name="Luyten Y.A."/>
            <person name="Slatko B."/>
            <person name="Wood N."/>
            <person name="Wu B."/>
            <person name="Teplitski M."/>
            <person name="Mougous J.D."/>
            <person name="Ward N."/>
            <person name="Eisen J.A."/>
            <person name="Badger J.H."/>
            <person name="Distel D.L."/>
        </authorList>
    </citation>
    <scope>NUCLEOTIDE SEQUENCE [LARGE SCALE GENOMIC DNA]</scope>
    <source>
        <strain>ATCC 39867 / T7901</strain>
    </source>
</reference>